<evidence type="ECO:0000250" key="1">
    <source>
        <dbReference type="UniProtKB" id="O74213"/>
    </source>
</evidence>
<evidence type="ECO:0000255" key="2"/>
<evidence type="ECO:0000255" key="3">
    <source>
        <dbReference type="PROSITE-ProRule" id="PRU00498"/>
    </source>
</evidence>
<evidence type="ECO:0000255" key="4">
    <source>
        <dbReference type="PROSITE-ProRule" id="PRU10052"/>
    </source>
</evidence>
<evidence type="ECO:0000256" key="5">
    <source>
        <dbReference type="SAM" id="MobiDB-lite"/>
    </source>
</evidence>
<evidence type="ECO:0000305" key="6"/>
<evidence type="ECO:0000305" key="7">
    <source>
    </source>
</evidence>
<gene>
    <name type="primary">PG1</name>
</gene>
<keyword id="KW-0134">Cell wall</keyword>
<keyword id="KW-0961">Cell wall biogenesis/degradation</keyword>
<keyword id="KW-1015">Disulfide bond</keyword>
<keyword id="KW-0325">Glycoprotein</keyword>
<keyword id="KW-0326">Glycosidase</keyword>
<keyword id="KW-0378">Hydrolase</keyword>
<keyword id="KW-1185">Reference proteome</keyword>
<keyword id="KW-0677">Repeat</keyword>
<keyword id="KW-0964">Secreted</keyword>
<keyword id="KW-0732">Signal</keyword>
<name>PGLR_TOBAC</name>
<accession>Q05967</accession>
<dbReference type="EC" id="3.2.1.15"/>
<dbReference type="EMBL" id="X71020">
    <property type="protein sequence ID" value="CAA50338.1"/>
    <property type="molecule type" value="Genomic_DNA"/>
</dbReference>
<dbReference type="EMBL" id="X71017">
    <property type="protein sequence ID" value="CAA50335.1"/>
    <property type="molecule type" value="mRNA"/>
</dbReference>
<dbReference type="EMBL" id="X71018">
    <property type="protein sequence ID" value="CAA50336.1"/>
    <property type="molecule type" value="mRNA"/>
</dbReference>
<dbReference type="EMBL" id="X71016">
    <property type="protein sequence ID" value="CAA50334.1"/>
    <property type="molecule type" value="mRNA"/>
</dbReference>
<dbReference type="EMBL" id="X71019">
    <property type="protein sequence ID" value="CAA50337.1"/>
    <property type="molecule type" value="mRNA"/>
</dbReference>
<dbReference type="PIR" id="S46532">
    <property type="entry name" value="S46532"/>
</dbReference>
<dbReference type="PIR" id="S46533">
    <property type="entry name" value="S46533"/>
</dbReference>
<dbReference type="SMR" id="Q05967"/>
<dbReference type="STRING" id="4097.Q05967"/>
<dbReference type="CAZy" id="GH28">
    <property type="family name" value="Glycoside Hydrolase Family 28"/>
</dbReference>
<dbReference type="GlyCosmos" id="Q05967">
    <property type="glycosylation" value="8 sites, No reported glycans"/>
</dbReference>
<dbReference type="PaxDb" id="4097-Q05967"/>
<dbReference type="Proteomes" id="UP000084051">
    <property type="component" value="Unplaced"/>
</dbReference>
<dbReference type="GO" id="GO:0005576">
    <property type="term" value="C:extracellular region"/>
    <property type="evidence" value="ECO:0007669"/>
    <property type="project" value="UniProtKB-SubCell"/>
</dbReference>
<dbReference type="GO" id="GO:0004650">
    <property type="term" value="F:polygalacturonase activity"/>
    <property type="evidence" value="ECO:0007669"/>
    <property type="project" value="UniProtKB-EC"/>
</dbReference>
<dbReference type="GO" id="GO:0005975">
    <property type="term" value="P:carbohydrate metabolic process"/>
    <property type="evidence" value="ECO:0007669"/>
    <property type="project" value="InterPro"/>
</dbReference>
<dbReference type="GO" id="GO:0071555">
    <property type="term" value="P:cell wall organization"/>
    <property type="evidence" value="ECO:0007669"/>
    <property type="project" value="UniProtKB-KW"/>
</dbReference>
<dbReference type="FunFam" id="2.160.20.10:FF:000004">
    <property type="entry name" value="Pectin lyase-like superfamily protein"/>
    <property type="match status" value="1"/>
</dbReference>
<dbReference type="Gene3D" id="2.160.20.10">
    <property type="entry name" value="Single-stranded right-handed beta-helix, Pectin lyase-like"/>
    <property type="match status" value="1"/>
</dbReference>
<dbReference type="InterPro" id="IPR000743">
    <property type="entry name" value="Glyco_hydro_28"/>
</dbReference>
<dbReference type="InterPro" id="IPR006626">
    <property type="entry name" value="PbH1"/>
</dbReference>
<dbReference type="InterPro" id="IPR012334">
    <property type="entry name" value="Pectin_lyas_fold"/>
</dbReference>
<dbReference type="InterPro" id="IPR011050">
    <property type="entry name" value="Pectin_lyase_fold/virulence"/>
</dbReference>
<dbReference type="PANTHER" id="PTHR31375">
    <property type="match status" value="1"/>
</dbReference>
<dbReference type="Pfam" id="PF00295">
    <property type="entry name" value="Glyco_hydro_28"/>
    <property type="match status" value="1"/>
</dbReference>
<dbReference type="SMART" id="SM00710">
    <property type="entry name" value="PbH1"/>
    <property type="match status" value="5"/>
</dbReference>
<dbReference type="SUPFAM" id="SSF51126">
    <property type="entry name" value="Pectin lyase-like"/>
    <property type="match status" value="1"/>
</dbReference>
<dbReference type="PROSITE" id="PS00502">
    <property type="entry name" value="POLYGALACTURONASE"/>
    <property type="match status" value="1"/>
</dbReference>
<comment type="function">
    <text>May function in depolymerizing pectin during pollen development, germination, and tube growth.</text>
</comment>
<comment type="catalytic activity">
    <reaction>
        <text>(1,4-alpha-D-galacturonosyl)n+m + H2O = (1,4-alpha-D-galacturonosyl)n + (1,4-alpha-D-galacturonosyl)m.</text>
        <dbReference type="EC" id="3.2.1.15"/>
    </reaction>
</comment>
<comment type="subcellular location">
    <subcellularLocation>
        <location>Secreted</location>
    </subcellularLocation>
    <subcellularLocation>
        <location>Secreted</location>
        <location>Cell wall</location>
    </subcellularLocation>
</comment>
<comment type="tissue specificity">
    <text>Pollen.</text>
</comment>
<comment type="similarity">
    <text evidence="6">Belongs to the glycosyl hydrolase 28 family.</text>
</comment>
<sequence length="396" mass="42469">MDLKFKVHFALVLLFLAHFGESQTGVFDITKYGANSNADISEALLNAFKEACQSTSPSTIVIPKGTFTMNQVKLEGPCKSPLELQIQATLKAPSDPSQLKVGEWLTVNKLDQFTMSGGGILDGQAAAAWECKQSKKCNKLPNNLSFNSLTNSTIKDITTLDSKSFHVNVNQCKNLTFIRFNVSAPANSPNTDGIHVSRSSSVNITDSNFSTGDDCISVGDETEQLYITRVTCGPGHGISVGSLGGNPDEKPVVGVFVRNCTFTNTDNGVRIKTWPASHPGVVNDVHFEDIIVQNVSNPVVIDQVYCPFNKCNKDLPSQVKISKVSFQNIKGTSRTQDAVSLLRSKGVPCEGIEVGDIDITYSGKEGPAKSSCENIKPSLKGKQNPPVCTASAASSS</sequence>
<protein>
    <recommendedName>
        <fullName>Polygalacturonase</fullName>
        <shortName>PG</shortName>
        <ecNumber>3.2.1.15</ecNumber>
    </recommendedName>
    <alternativeName>
        <fullName>Pectinase</fullName>
    </alternativeName>
</protein>
<reference key="1">
    <citation type="journal article" date="1994" name="Plant Mol. Biol.">
        <title>Characterization of a tobacco gene encoding a pollen-specific polygalacturonase.</title>
        <authorList>
            <person name="Tebbutt S.J."/>
            <person name="Lonsdale D.M."/>
        </authorList>
    </citation>
    <scope>NUCLEOTIDE SEQUENCE [GENOMIC DNA]</scope>
    <scope>NUCLEOTIDE SEQUENCE [MRNA] OF 12-396</scope>
    <scope>VARIANTS VAL-154; SER-258; VAL-262; ARG-286; CYS-343 AND ASP-381</scope>
    <source>
        <strain>cv. Havana</strain>
        <tissue>Pollen</tissue>
    </source>
</reference>
<feature type="signal peptide" evidence="2">
    <location>
        <begin position="1"/>
        <end position="22"/>
    </location>
</feature>
<feature type="chain" id="PRO_0000024813" description="Polygalacturonase">
    <location>
        <begin position="23"/>
        <end position="396"/>
    </location>
</feature>
<feature type="repeat" description="PbH1 1" evidence="2">
    <location>
        <begin position="172"/>
        <end position="198"/>
    </location>
</feature>
<feature type="repeat" description="PbH1 2" evidence="2">
    <location>
        <begin position="199"/>
        <end position="220"/>
    </location>
</feature>
<feature type="repeat" description="PbH1 3" evidence="2">
    <location>
        <begin position="252"/>
        <end position="273"/>
    </location>
</feature>
<feature type="repeat" description="PbH1 4" evidence="2">
    <location>
        <begin position="282"/>
        <end position="303"/>
    </location>
</feature>
<feature type="repeat" description="PbH1 5" evidence="2">
    <location>
        <begin position="316"/>
        <end position="356"/>
    </location>
</feature>
<feature type="region of interest" description="Disordered" evidence="5">
    <location>
        <begin position="364"/>
        <end position="396"/>
    </location>
</feature>
<feature type="active site" description="Proton donor" evidence="1">
    <location>
        <position position="213"/>
    </location>
</feature>
<feature type="active site" evidence="4">
    <location>
        <position position="236"/>
    </location>
</feature>
<feature type="glycosylation site" description="N-linked (GlcNAc...) asparagine" evidence="3">
    <location>
        <position position="143"/>
    </location>
</feature>
<feature type="glycosylation site" description="N-linked (GlcNAc...) asparagine" evidence="3">
    <location>
        <position position="151"/>
    </location>
</feature>
<feature type="glycosylation site" description="N-linked (GlcNAc...) asparagine" evidence="3">
    <location>
        <position position="174"/>
    </location>
</feature>
<feature type="glycosylation site" description="N-linked (GlcNAc...) asparagine" evidence="3">
    <location>
        <position position="181"/>
    </location>
</feature>
<feature type="glycosylation site" description="N-linked (GlcNAc...) asparagine" evidence="3">
    <location>
        <position position="203"/>
    </location>
</feature>
<feature type="glycosylation site" description="N-linked (GlcNAc...) asparagine" evidence="3">
    <location>
        <position position="208"/>
    </location>
</feature>
<feature type="glycosylation site" description="N-linked (GlcNAc...) asparagine" evidence="3">
    <location>
        <position position="259"/>
    </location>
</feature>
<feature type="glycosylation site" description="N-linked (GlcNAc...) asparagine" evidence="3">
    <location>
        <position position="294"/>
    </location>
</feature>
<feature type="disulfide bond" evidence="1">
    <location>
        <begin position="215"/>
        <end position="232"/>
    </location>
</feature>
<feature type="disulfide bond" evidence="1">
    <location>
        <begin position="372"/>
        <end position="388"/>
    </location>
</feature>
<feature type="sequence variant" evidence="7">
    <original>I</original>
    <variation>V</variation>
    <location>
        <position position="154"/>
    </location>
</feature>
<feature type="sequence variant" evidence="7">
    <original>R</original>
    <variation>S</variation>
    <location>
        <position position="258"/>
    </location>
</feature>
<feature type="sequence variant" evidence="7">
    <original>F</original>
    <variation>V</variation>
    <location>
        <position position="262"/>
    </location>
</feature>
<feature type="sequence variant" evidence="7">
    <original>H</original>
    <variation>R</variation>
    <location>
        <position position="286"/>
    </location>
</feature>
<feature type="sequence variant" description="In clones G27W, G27X and G27Y." evidence="7">
    <original>R</original>
    <variation>C</variation>
    <location>
        <position position="343"/>
    </location>
</feature>
<feature type="sequence variant" description="In clone G27W." evidence="7">
    <original>G</original>
    <variation>D</variation>
    <location>
        <position position="381"/>
    </location>
</feature>
<proteinExistence type="evidence at transcript level"/>
<organism>
    <name type="scientific">Nicotiana tabacum</name>
    <name type="common">Common tobacco</name>
    <dbReference type="NCBI Taxonomy" id="4097"/>
    <lineage>
        <taxon>Eukaryota</taxon>
        <taxon>Viridiplantae</taxon>
        <taxon>Streptophyta</taxon>
        <taxon>Embryophyta</taxon>
        <taxon>Tracheophyta</taxon>
        <taxon>Spermatophyta</taxon>
        <taxon>Magnoliopsida</taxon>
        <taxon>eudicotyledons</taxon>
        <taxon>Gunneridae</taxon>
        <taxon>Pentapetalae</taxon>
        <taxon>asterids</taxon>
        <taxon>lamiids</taxon>
        <taxon>Solanales</taxon>
        <taxon>Solanaceae</taxon>
        <taxon>Nicotianoideae</taxon>
        <taxon>Nicotianeae</taxon>
        <taxon>Nicotiana</taxon>
    </lineage>
</organism>